<evidence type="ECO:0000255" key="1">
    <source>
        <dbReference type="HAMAP-Rule" id="MF_01225"/>
    </source>
</evidence>
<evidence type="ECO:0000255" key="2">
    <source>
        <dbReference type="PROSITE-ProRule" id="PRU01266"/>
    </source>
</evidence>
<keyword id="KW-0004">4Fe-4S</keyword>
<keyword id="KW-0342">GTP-binding</keyword>
<keyword id="KW-0408">Iron</keyword>
<keyword id="KW-0411">Iron-sulfur</keyword>
<keyword id="KW-0456">Lyase</keyword>
<keyword id="KW-0479">Metal-binding</keyword>
<keyword id="KW-0501">Molybdenum cofactor biosynthesis</keyword>
<keyword id="KW-0547">Nucleotide-binding</keyword>
<keyword id="KW-0949">S-adenosyl-L-methionine</keyword>
<proteinExistence type="inferred from homology"/>
<sequence>MLIDGHGRTVDYLRVSVTERCNFRCQYCMPEKPFSWVPKENLLSFEELFLFMKVAMDEGVNKIRITGGEPLLREDLDSFIKMIHDYKPDIDLALTTNAYLLPQTAQKLKDAGLKRLNISLDSLKPEVAHQIAQKDVLGQVLKGIDKALEVGLGVKINMVPLKGINDNEILDVMEYCMDRNIKIRFIEYMENRHALEALKGMHGKEILSKVKEKYTIHALGREGASPSFNYTIEENGYEFGLIDPHKHDFCESCNRIRLTAEGFLIPCLYFDEALSIAEAVKKGDIEEASQVLATVLKDKPKENRWIEGELEEGQEVSSRAFYETGG</sequence>
<protein>
    <recommendedName>
        <fullName evidence="1">GTP 3',8-cyclase</fullName>
        <ecNumber evidence="1">4.1.99.22</ecNumber>
    </recommendedName>
    <alternativeName>
        <fullName evidence="1">Molybdenum cofactor biosynthesis protein A</fullName>
    </alternativeName>
</protein>
<accession>A6Q6R2</accession>
<gene>
    <name evidence="1" type="primary">moaA</name>
    <name type="ordered locus">SUN_0211</name>
</gene>
<dbReference type="EC" id="4.1.99.22" evidence="1"/>
<dbReference type="EMBL" id="AP009179">
    <property type="protein sequence ID" value="BAF71171.1"/>
    <property type="molecule type" value="Genomic_DNA"/>
</dbReference>
<dbReference type="RefSeq" id="WP_011979904.1">
    <property type="nucleotide sequence ID" value="NC_009663.1"/>
</dbReference>
<dbReference type="SMR" id="A6Q6R2"/>
<dbReference type="STRING" id="387093.SUN_0211"/>
<dbReference type="KEGG" id="sun:SUN_0211"/>
<dbReference type="eggNOG" id="COG2896">
    <property type="taxonomic scope" value="Bacteria"/>
</dbReference>
<dbReference type="HOGENOM" id="CLU_009273_0_1_7"/>
<dbReference type="OrthoDB" id="9763993at2"/>
<dbReference type="UniPathway" id="UPA00344"/>
<dbReference type="Proteomes" id="UP000006378">
    <property type="component" value="Chromosome"/>
</dbReference>
<dbReference type="GO" id="GO:0051539">
    <property type="term" value="F:4 iron, 4 sulfur cluster binding"/>
    <property type="evidence" value="ECO:0007669"/>
    <property type="project" value="UniProtKB-UniRule"/>
</dbReference>
<dbReference type="GO" id="GO:0061799">
    <property type="term" value="F:cyclic pyranopterin monophosphate synthase activity"/>
    <property type="evidence" value="ECO:0007669"/>
    <property type="project" value="TreeGrafter"/>
</dbReference>
<dbReference type="GO" id="GO:0061798">
    <property type="term" value="F:GTP 3',8'-cyclase activity"/>
    <property type="evidence" value="ECO:0007669"/>
    <property type="project" value="UniProtKB-UniRule"/>
</dbReference>
<dbReference type="GO" id="GO:0005525">
    <property type="term" value="F:GTP binding"/>
    <property type="evidence" value="ECO:0007669"/>
    <property type="project" value="UniProtKB-UniRule"/>
</dbReference>
<dbReference type="GO" id="GO:0046872">
    <property type="term" value="F:metal ion binding"/>
    <property type="evidence" value="ECO:0007669"/>
    <property type="project" value="UniProtKB-KW"/>
</dbReference>
<dbReference type="GO" id="GO:1904047">
    <property type="term" value="F:S-adenosyl-L-methionine binding"/>
    <property type="evidence" value="ECO:0007669"/>
    <property type="project" value="UniProtKB-UniRule"/>
</dbReference>
<dbReference type="GO" id="GO:0006777">
    <property type="term" value="P:Mo-molybdopterin cofactor biosynthetic process"/>
    <property type="evidence" value="ECO:0007669"/>
    <property type="project" value="UniProtKB-UniRule"/>
</dbReference>
<dbReference type="CDD" id="cd01335">
    <property type="entry name" value="Radical_SAM"/>
    <property type="match status" value="1"/>
</dbReference>
<dbReference type="CDD" id="cd21117">
    <property type="entry name" value="Twitch_MoaA"/>
    <property type="match status" value="1"/>
</dbReference>
<dbReference type="Gene3D" id="3.20.20.70">
    <property type="entry name" value="Aldolase class I"/>
    <property type="match status" value="1"/>
</dbReference>
<dbReference type="HAMAP" id="MF_01225_B">
    <property type="entry name" value="MoaA_B"/>
    <property type="match status" value="1"/>
</dbReference>
<dbReference type="InterPro" id="IPR013785">
    <property type="entry name" value="Aldolase_TIM"/>
</dbReference>
<dbReference type="InterPro" id="IPR006638">
    <property type="entry name" value="Elp3/MiaA/NifB-like_rSAM"/>
</dbReference>
<dbReference type="InterPro" id="IPR013483">
    <property type="entry name" value="MoaA"/>
</dbReference>
<dbReference type="InterPro" id="IPR000385">
    <property type="entry name" value="MoaA_NifB_PqqE_Fe-S-bd_CS"/>
</dbReference>
<dbReference type="InterPro" id="IPR010505">
    <property type="entry name" value="MoaA_twitch"/>
</dbReference>
<dbReference type="InterPro" id="IPR050105">
    <property type="entry name" value="MoCo_biosynth_MoaA/MoaC"/>
</dbReference>
<dbReference type="InterPro" id="IPR007197">
    <property type="entry name" value="rSAM"/>
</dbReference>
<dbReference type="NCBIfam" id="TIGR02666">
    <property type="entry name" value="moaA"/>
    <property type="match status" value="1"/>
</dbReference>
<dbReference type="PANTHER" id="PTHR22960:SF0">
    <property type="entry name" value="MOLYBDENUM COFACTOR BIOSYNTHESIS PROTEIN 1"/>
    <property type="match status" value="1"/>
</dbReference>
<dbReference type="PANTHER" id="PTHR22960">
    <property type="entry name" value="MOLYBDOPTERIN COFACTOR SYNTHESIS PROTEIN A"/>
    <property type="match status" value="1"/>
</dbReference>
<dbReference type="Pfam" id="PF13353">
    <property type="entry name" value="Fer4_12"/>
    <property type="match status" value="1"/>
</dbReference>
<dbReference type="Pfam" id="PF06463">
    <property type="entry name" value="Mob_synth_C"/>
    <property type="match status" value="1"/>
</dbReference>
<dbReference type="Pfam" id="PF04055">
    <property type="entry name" value="Radical_SAM"/>
    <property type="match status" value="1"/>
</dbReference>
<dbReference type="SFLD" id="SFLDG01383">
    <property type="entry name" value="cyclic_pyranopterin_phosphate"/>
    <property type="match status" value="1"/>
</dbReference>
<dbReference type="SFLD" id="SFLDG01067">
    <property type="entry name" value="SPASM/twitch_domain_containing"/>
    <property type="match status" value="1"/>
</dbReference>
<dbReference type="SMART" id="SM00729">
    <property type="entry name" value="Elp3"/>
    <property type="match status" value="1"/>
</dbReference>
<dbReference type="SUPFAM" id="SSF102114">
    <property type="entry name" value="Radical SAM enzymes"/>
    <property type="match status" value="1"/>
</dbReference>
<dbReference type="PROSITE" id="PS01305">
    <property type="entry name" value="MOAA_NIFB_PQQE"/>
    <property type="match status" value="1"/>
</dbReference>
<dbReference type="PROSITE" id="PS51918">
    <property type="entry name" value="RADICAL_SAM"/>
    <property type="match status" value="1"/>
</dbReference>
<organism>
    <name type="scientific">Sulfurovum sp. (strain NBC37-1)</name>
    <dbReference type="NCBI Taxonomy" id="387093"/>
    <lineage>
        <taxon>Bacteria</taxon>
        <taxon>Pseudomonadati</taxon>
        <taxon>Campylobacterota</taxon>
        <taxon>Epsilonproteobacteria</taxon>
        <taxon>Campylobacterales</taxon>
        <taxon>Sulfurovaceae</taxon>
        <taxon>Sulfurovum</taxon>
    </lineage>
</organism>
<feature type="chain" id="PRO_1000054231" description="GTP 3',8-cyclase">
    <location>
        <begin position="1"/>
        <end position="326"/>
    </location>
</feature>
<feature type="domain" description="Radical SAM core" evidence="2">
    <location>
        <begin position="5"/>
        <end position="227"/>
    </location>
</feature>
<feature type="binding site" evidence="1">
    <location>
        <position position="14"/>
    </location>
    <ligand>
        <name>GTP</name>
        <dbReference type="ChEBI" id="CHEBI:37565"/>
    </ligand>
</feature>
<feature type="binding site" evidence="1">
    <location>
        <position position="21"/>
    </location>
    <ligand>
        <name>[4Fe-4S] cluster</name>
        <dbReference type="ChEBI" id="CHEBI:49883"/>
        <label>1</label>
        <note>4Fe-4S-S-AdoMet</note>
    </ligand>
</feature>
<feature type="binding site" evidence="1">
    <location>
        <position position="25"/>
    </location>
    <ligand>
        <name>[4Fe-4S] cluster</name>
        <dbReference type="ChEBI" id="CHEBI:49883"/>
        <label>1</label>
        <note>4Fe-4S-S-AdoMet</note>
    </ligand>
</feature>
<feature type="binding site" evidence="1">
    <location>
        <position position="27"/>
    </location>
    <ligand>
        <name>S-adenosyl-L-methionine</name>
        <dbReference type="ChEBI" id="CHEBI:59789"/>
    </ligand>
</feature>
<feature type="binding site" evidence="1">
    <location>
        <position position="28"/>
    </location>
    <ligand>
        <name>[4Fe-4S] cluster</name>
        <dbReference type="ChEBI" id="CHEBI:49883"/>
        <label>1</label>
        <note>4Fe-4S-S-AdoMet</note>
    </ligand>
</feature>
<feature type="binding site" evidence="1">
    <location>
        <position position="64"/>
    </location>
    <ligand>
        <name>GTP</name>
        <dbReference type="ChEBI" id="CHEBI:37565"/>
    </ligand>
</feature>
<feature type="binding site" evidence="1">
    <location>
        <position position="68"/>
    </location>
    <ligand>
        <name>S-adenosyl-L-methionine</name>
        <dbReference type="ChEBI" id="CHEBI:59789"/>
    </ligand>
</feature>
<feature type="binding site" evidence="1">
    <location>
        <position position="95"/>
    </location>
    <ligand>
        <name>GTP</name>
        <dbReference type="ChEBI" id="CHEBI:37565"/>
    </ligand>
</feature>
<feature type="binding site" evidence="1">
    <location>
        <position position="119"/>
    </location>
    <ligand>
        <name>S-adenosyl-L-methionine</name>
        <dbReference type="ChEBI" id="CHEBI:59789"/>
    </ligand>
</feature>
<feature type="binding site" evidence="1">
    <location>
        <position position="155"/>
    </location>
    <ligand>
        <name>GTP</name>
        <dbReference type="ChEBI" id="CHEBI:37565"/>
    </ligand>
</feature>
<feature type="binding site" evidence="1">
    <location>
        <position position="189"/>
    </location>
    <ligand>
        <name>S-adenosyl-L-methionine</name>
        <dbReference type="ChEBI" id="CHEBI:59789"/>
    </ligand>
</feature>
<feature type="binding site" evidence="1">
    <location>
        <position position="250"/>
    </location>
    <ligand>
        <name>[4Fe-4S] cluster</name>
        <dbReference type="ChEBI" id="CHEBI:49883"/>
        <label>2</label>
        <note>4Fe-4S-substrate</note>
    </ligand>
</feature>
<feature type="binding site" evidence="1">
    <location>
        <position position="253"/>
    </location>
    <ligand>
        <name>[4Fe-4S] cluster</name>
        <dbReference type="ChEBI" id="CHEBI:49883"/>
        <label>2</label>
        <note>4Fe-4S-substrate</note>
    </ligand>
</feature>
<feature type="binding site" evidence="1">
    <location>
        <begin position="255"/>
        <end position="257"/>
    </location>
    <ligand>
        <name>GTP</name>
        <dbReference type="ChEBI" id="CHEBI:37565"/>
    </ligand>
</feature>
<feature type="binding site" evidence="1">
    <location>
        <position position="267"/>
    </location>
    <ligand>
        <name>[4Fe-4S] cluster</name>
        <dbReference type="ChEBI" id="CHEBI:49883"/>
        <label>2</label>
        <note>4Fe-4S-substrate</note>
    </ligand>
</feature>
<comment type="function">
    <text evidence="1">Catalyzes the cyclization of GTP to (8S)-3',8-cyclo-7,8-dihydroguanosine 5'-triphosphate.</text>
</comment>
<comment type="catalytic activity">
    <reaction evidence="1">
        <text>GTP + AH2 + S-adenosyl-L-methionine = (8S)-3',8-cyclo-7,8-dihydroguanosine 5'-triphosphate + 5'-deoxyadenosine + L-methionine + A + H(+)</text>
        <dbReference type="Rhea" id="RHEA:49576"/>
        <dbReference type="ChEBI" id="CHEBI:13193"/>
        <dbReference type="ChEBI" id="CHEBI:15378"/>
        <dbReference type="ChEBI" id="CHEBI:17319"/>
        <dbReference type="ChEBI" id="CHEBI:17499"/>
        <dbReference type="ChEBI" id="CHEBI:37565"/>
        <dbReference type="ChEBI" id="CHEBI:57844"/>
        <dbReference type="ChEBI" id="CHEBI:59789"/>
        <dbReference type="ChEBI" id="CHEBI:131766"/>
        <dbReference type="EC" id="4.1.99.22"/>
    </reaction>
</comment>
<comment type="cofactor">
    <cofactor evidence="1">
        <name>[4Fe-4S] cluster</name>
        <dbReference type="ChEBI" id="CHEBI:49883"/>
    </cofactor>
    <text evidence="1">Binds 2 [4Fe-4S] clusters. Binds 1 [4Fe-4S] cluster coordinated with 3 cysteines and an exchangeable S-adenosyl-L-methionine and 1 [4Fe-4S] cluster coordinated with 3 cysteines and the GTP-derived substrate.</text>
</comment>
<comment type="pathway">
    <text evidence="1">Cofactor biosynthesis; molybdopterin biosynthesis.</text>
</comment>
<comment type="subunit">
    <text evidence="1">Monomer and homodimer.</text>
</comment>
<comment type="similarity">
    <text evidence="1">Belongs to the radical SAM superfamily. MoaA family.</text>
</comment>
<reference key="1">
    <citation type="journal article" date="2007" name="Proc. Natl. Acad. Sci. U.S.A.">
        <title>Deep-sea vent epsilon-proteobacterial genomes provide insights into emergence of pathogens.</title>
        <authorList>
            <person name="Nakagawa S."/>
            <person name="Takaki Y."/>
            <person name="Shimamura S."/>
            <person name="Reysenbach A.-L."/>
            <person name="Takai K."/>
            <person name="Horikoshi K."/>
        </authorList>
    </citation>
    <scope>NUCLEOTIDE SEQUENCE [LARGE SCALE GENOMIC DNA]</scope>
    <source>
        <strain>NBC37-1</strain>
    </source>
</reference>
<name>MOAA_SULNB</name>